<gene>
    <name evidence="1" type="primary">murI</name>
    <name type="ordered locus">SACE_1209</name>
</gene>
<organism>
    <name type="scientific">Saccharopolyspora erythraea (strain ATCC 11635 / DSM 40517 / JCM 4748 / NBRC 13426 / NCIMB 8594 / NRRL 2338)</name>
    <dbReference type="NCBI Taxonomy" id="405948"/>
    <lineage>
        <taxon>Bacteria</taxon>
        <taxon>Bacillati</taxon>
        <taxon>Actinomycetota</taxon>
        <taxon>Actinomycetes</taxon>
        <taxon>Pseudonocardiales</taxon>
        <taxon>Pseudonocardiaceae</taxon>
        <taxon>Saccharopolyspora</taxon>
    </lineage>
</organism>
<comment type="function">
    <text evidence="1">Provides the (R)-glutamate required for cell wall biosynthesis.</text>
</comment>
<comment type="catalytic activity">
    <reaction evidence="1">
        <text>L-glutamate = D-glutamate</text>
        <dbReference type="Rhea" id="RHEA:12813"/>
        <dbReference type="ChEBI" id="CHEBI:29985"/>
        <dbReference type="ChEBI" id="CHEBI:29986"/>
        <dbReference type="EC" id="5.1.1.3"/>
    </reaction>
</comment>
<comment type="pathway">
    <text evidence="1">Cell wall biogenesis; peptidoglycan biosynthesis.</text>
</comment>
<comment type="similarity">
    <text evidence="1">Belongs to the aspartate/glutamate racemases family.</text>
</comment>
<name>MURI_SACEN</name>
<accession>A4F910</accession>
<sequence>MTHAPIGIFDSGVGGLTVARAIMDQLPGEALRYVGDTANAPYGPRPLADIRARTLAITDSLVAEGVKMLVIACNSASAACLRDARERYDVPVVEVVLPAVRRAVATTRNGRVGVIGTQATITSRAYDDAFTAAPGVTLSTAACPRFADFVERGITSGRQVLGLAQAYLDPLQQADVDTLVLGCTHYPLLTGVLQLAMGDHVTLVSSAEETAKDVLRVLTEHDLLAEADGEPAHEFRATGSGESFAKLARRFLGPSLAADAIDPLAVSSSSA</sequence>
<proteinExistence type="inferred from homology"/>
<feature type="chain" id="PRO_1000078570" description="Glutamate racemase">
    <location>
        <begin position="1"/>
        <end position="271"/>
    </location>
</feature>
<feature type="active site" description="Proton donor/acceptor" evidence="1">
    <location>
        <position position="73"/>
    </location>
</feature>
<feature type="active site" description="Proton donor/acceptor" evidence="1">
    <location>
        <position position="183"/>
    </location>
</feature>
<feature type="binding site" evidence="1">
    <location>
        <begin position="10"/>
        <end position="11"/>
    </location>
    <ligand>
        <name>substrate</name>
    </ligand>
</feature>
<feature type="binding site" evidence="1">
    <location>
        <begin position="42"/>
        <end position="43"/>
    </location>
    <ligand>
        <name>substrate</name>
    </ligand>
</feature>
<feature type="binding site" evidence="1">
    <location>
        <begin position="74"/>
        <end position="75"/>
    </location>
    <ligand>
        <name>substrate</name>
    </ligand>
</feature>
<feature type="binding site" evidence="1">
    <location>
        <begin position="184"/>
        <end position="185"/>
    </location>
    <ligand>
        <name>substrate</name>
    </ligand>
</feature>
<protein>
    <recommendedName>
        <fullName evidence="1">Glutamate racemase</fullName>
        <ecNumber evidence="1">5.1.1.3</ecNumber>
    </recommendedName>
</protein>
<dbReference type="EC" id="5.1.1.3" evidence="1"/>
<dbReference type="EMBL" id="AM420293">
    <property type="protein sequence ID" value="CAM00535.1"/>
    <property type="molecule type" value="Genomic_DNA"/>
</dbReference>
<dbReference type="RefSeq" id="WP_009945462.1">
    <property type="nucleotide sequence ID" value="NC_009142.1"/>
</dbReference>
<dbReference type="SMR" id="A4F910"/>
<dbReference type="STRING" id="405948.SACE_1209"/>
<dbReference type="KEGG" id="sen:SACE_1209"/>
<dbReference type="eggNOG" id="COG0796">
    <property type="taxonomic scope" value="Bacteria"/>
</dbReference>
<dbReference type="HOGENOM" id="CLU_052344_0_1_11"/>
<dbReference type="OrthoDB" id="9801055at2"/>
<dbReference type="UniPathway" id="UPA00219"/>
<dbReference type="Proteomes" id="UP000006728">
    <property type="component" value="Chromosome"/>
</dbReference>
<dbReference type="GO" id="GO:0008881">
    <property type="term" value="F:glutamate racemase activity"/>
    <property type="evidence" value="ECO:0007669"/>
    <property type="project" value="UniProtKB-UniRule"/>
</dbReference>
<dbReference type="GO" id="GO:0071555">
    <property type="term" value="P:cell wall organization"/>
    <property type="evidence" value="ECO:0007669"/>
    <property type="project" value="UniProtKB-KW"/>
</dbReference>
<dbReference type="GO" id="GO:0009252">
    <property type="term" value="P:peptidoglycan biosynthetic process"/>
    <property type="evidence" value="ECO:0007669"/>
    <property type="project" value="UniProtKB-UniRule"/>
</dbReference>
<dbReference type="GO" id="GO:0008360">
    <property type="term" value="P:regulation of cell shape"/>
    <property type="evidence" value="ECO:0007669"/>
    <property type="project" value="UniProtKB-KW"/>
</dbReference>
<dbReference type="FunFam" id="3.40.50.1860:FF:000002">
    <property type="entry name" value="Glutamate racemase"/>
    <property type="match status" value="1"/>
</dbReference>
<dbReference type="Gene3D" id="3.40.50.1860">
    <property type="match status" value="2"/>
</dbReference>
<dbReference type="HAMAP" id="MF_00258">
    <property type="entry name" value="Glu_racemase"/>
    <property type="match status" value="1"/>
</dbReference>
<dbReference type="InterPro" id="IPR015942">
    <property type="entry name" value="Asp/Glu/hydantoin_racemase"/>
</dbReference>
<dbReference type="InterPro" id="IPR001920">
    <property type="entry name" value="Asp/Glu_race"/>
</dbReference>
<dbReference type="InterPro" id="IPR018187">
    <property type="entry name" value="Asp/Glu_racemase_AS_1"/>
</dbReference>
<dbReference type="InterPro" id="IPR033134">
    <property type="entry name" value="Asp/Glu_racemase_AS_2"/>
</dbReference>
<dbReference type="InterPro" id="IPR004391">
    <property type="entry name" value="Glu_race"/>
</dbReference>
<dbReference type="NCBIfam" id="TIGR00067">
    <property type="entry name" value="glut_race"/>
    <property type="match status" value="1"/>
</dbReference>
<dbReference type="PANTHER" id="PTHR21198">
    <property type="entry name" value="GLUTAMATE RACEMASE"/>
    <property type="match status" value="1"/>
</dbReference>
<dbReference type="PANTHER" id="PTHR21198:SF2">
    <property type="entry name" value="GLUTAMATE RACEMASE"/>
    <property type="match status" value="1"/>
</dbReference>
<dbReference type="Pfam" id="PF01177">
    <property type="entry name" value="Asp_Glu_race"/>
    <property type="match status" value="1"/>
</dbReference>
<dbReference type="SUPFAM" id="SSF53681">
    <property type="entry name" value="Aspartate/glutamate racemase"/>
    <property type="match status" value="2"/>
</dbReference>
<dbReference type="PROSITE" id="PS00923">
    <property type="entry name" value="ASP_GLU_RACEMASE_1"/>
    <property type="match status" value="1"/>
</dbReference>
<dbReference type="PROSITE" id="PS00924">
    <property type="entry name" value="ASP_GLU_RACEMASE_2"/>
    <property type="match status" value="1"/>
</dbReference>
<keyword id="KW-0133">Cell shape</keyword>
<keyword id="KW-0961">Cell wall biogenesis/degradation</keyword>
<keyword id="KW-0413">Isomerase</keyword>
<keyword id="KW-0573">Peptidoglycan synthesis</keyword>
<keyword id="KW-1185">Reference proteome</keyword>
<evidence type="ECO:0000255" key="1">
    <source>
        <dbReference type="HAMAP-Rule" id="MF_00258"/>
    </source>
</evidence>
<reference key="1">
    <citation type="journal article" date="2007" name="Nat. Biotechnol.">
        <title>Complete genome sequence of the erythromycin-producing bacterium Saccharopolyspora erythraea NRRL23338.</title>
        <authorList>
            <person name="Oliynyk M."/>
            <person name="Samborskyy M."/>
            <person name="Lester J.B."/>
            <person name="Mironenko T."/>
            <person name="Scott N."/>
            <person name="Dickens S."/>
            <person name="Haydock S.F."/>
            <person name="Leadlay P.F."/>
        </authorList>
    </citation>
    <scope>NUCLEOTIDE SEQUENCE [LARGE SCALE GENOMIC DNA]</scope>
    <source>
        <strain>ATCC 11635 / DSM 40517 / JCM 4748 / NBRC 13426 / NCIMB 8594 / NRRL 2338</strain>
    </source>
</reference>